<proteinExistence type="inferred from homology"/>
<dbReference type="EC" id="3.4.14.10"/>
<dbReference type="EMBL" id="ACYE01000161">
    <property type="protein sequence ID" value="EFE42120.1"/>
    <property type="status" value="ALT_SEQ"/>
    <property type="molecule type" value="Genomic_DNA"/>
</dbReference>
<dbReference type="RefSeq" id="XP_003022738.1">
    <property type="nucleotide sequence ID" value="XM_003022692.1"/>
</dbReference>
<dbReference type="SMR" id="D4D7N6"/>
<dbReference type="GlyCosmos" id="D4D7N6">
    <property type="glycosylation" value="7 sites, No reported glycans"/>
</dbReference>
<dbReference type="GeneID" id="9581428"/>
<dbReference type="KEGG" id="tve:TRV_03120"/>
<dbReference type="HOGENOM" id="CLU_013783_3_0_1"/>
<dbReference type="OrthoDB" id="2105at34384"/>
<dbReference type="Proteomes" id="UP000008383">
    <property type="component" value="Unassembled WGS sequence"/>
</dbReference>
<dbReference type="GO" id="GO:0005576">
    <property type="term" value="C:extracellular region"/>
    <property type="evidence" value="ECO:0007669"/>
    <property type="project" value="UniProtKB-SubCell"/>
</dbReference>
<dbReference type="GO" id="GO:0046872">
    <property type="term" value="F:metal ion binding"/>
    <property type="evidence" value="ECO:0007669"/>
    <property type="project" value="UniProtKB-KW"/>
</dbReference>
<dbReference type="GO" id="GO:0004252">
    <property type="term" value="F:serine-type endopeptidase activity"/>
    <property type="evidence" value="ECO:0007669"/>
    <property type="project" value="InterPro"/>
</dbReference>
<dbReference type="GO" id="GO:0008240">
    <property type="term" value="F:tripeptidyl-peptidase activity"/>
    <property type="evidence" value="ECO:0007669"/>
    <property type="project" value="UniProtKB-EC"/>
</dbReference>
<dbReference type="GO" id="GO:0006508">
    <property type="term" value="P:proteolysis"/>
    <property type="evidence" value="ECO:0007669"/>
    <property type="project" value="UniProtKB-KW"/>
</dbReference>
<dbReference type="CDD" id="cd04056">
    <property type="entry name" value="Peptidases_S53"/>
    <property type="match status" value="1"/>
</dbReference>
<dbReference type="CDD" id="cd11377">
    <property type="entry name" value="Pro-peptidase_S53"/>
    <property type="match status" value="1"/>
</dbReference>
<dbReference type="FunFam" id="3.40.50.200:FF:000015">
    <property type="entry name" value="Tripeptidyl peptidase A"/>
    <property type="match status" value="1"/>
</dbReference>
<dbReference type="Gene3D" id="3.40.50.200">
    <property type="entry name" value="Peptidase S8/S53 domain"/>
    <property type="match status" value="1"/>
</dbReference>
<dbReference type="InterPro" id="IPR000209">
    <property type="entry name" value="Peptidase_S8/S53_dom"/>
</dbReference>
<dbReference type="InterPro" id="IPR036852">
    <property type="entry name" value="Peptidase_S8/S53_dom_sf"/>
</dbReference>
<dbReference type="InterPro" id="IPR015366">
    <property type="entry name" value="S53_propep"/>
</dbReference>
<dbReference type="InterPro" id="IPR030400">
    <property type="entry name" value="Sedolisin_dom"/>
</dbReference>
<dbReference type="InterPro" id="IPR050819">
    <property type="entry name" value="Tripeptidyl-peptidase_I"/>
</dbReference>
<dbReference type="PANTHER" id="PTHR14218">
    <property type="entry name" value="PROTEASE S8 TRIPEPTIDYL PEPTIDASE I CLN2"/>
    <property type="match status" value="1"/>
</dbReference>
<dbReference type="PANTHER" id="PTHR14218:SF32">
    <property type="entry name" value="TRIPEPTIDYL PEPTIDASE SED3 (AFU_ORTHOLOGUE AFUA_3G08930)"/>
    <property type="match status" value="1"/>
</dbReference>
<dbReference type="Pfam" id="PF00082">
    <property type="entry name" value="Peptidase_S8"/>
    <property type="match status" value="1"/>
</dbReference>
<dbReference type="Pfam" id="PF09286">
    <property type="entry name" value="Pro-kuma_activ"/>
    <property type="match status" value="1"/>
</dbReference>
<dbReference type="SMART" id="SM00944">
    <property type="entry name" value="Pro-kuma_activ"/>
    <property type="match status" value="1"/>
</dbReference>
<dbReference type="SUPFAM" id="SSF54897">
    <property type="entry name" value="Protease propeptides/inhibitors"/>
    <property type="match status" value="1"/>
</dbReference>
<dbReference type="SUPFAM" id="SSF52743">
    <property type="entry name" value="Subtilisin-like"/>
    <property type="match status" value="1"/>
</dbReference>
<dbReference type="PROSITE" id="PS51695">
    <property type="entry name" value="SEDOLISIN"/>
    <property type="match status" value="1"/>
</dbReference>
<organism>
    <name type="scientific">Trichophyton verrucosum (strain HKI 0517)</name>
    <dbReference type="NCBI Taxonomy" id="663202"/>
    <lineage>
        <taxon>Eukaryota</taxon>
        <taxon>Fungi</taxon>
        <taxon>Dikarya</taxon>
        <taxon>Ascomycota</taxon>
        <taxon>Pezizomycotina</taxon>
        <taxon>Eurotiomycetes</taxon>
        <taxon>Eurotiomycetidae</taxon>
        <taxon>Onygenales</taxon>
        <taxon>Arthrodermataceae</taxon>
        <taxon>Trichophyton</taxon>
    </lineage>
</organism>
<reference key="1">
    <citation type="journal article" date="2011" name="Genome Biol.">
        <title>Comparative and functional genomics provide insights into the pathogenicity of dermatophytic fungi.</title>
        <authorList>
            <person name="Burmester A."/>
            <person name="Shelest E."/>
            <person name="Gloeckner G."/>
            <person name="Heddergott C."/>
            <person name="Schindler S."/>
            <person name="Staib P."/>
            <person name="Heidel A."/>
            <person name="Felder M."/>
            <person name="Petzold A."/>
            <person name="Szafranski K."/>
            <person name="Feuermann M."/>
            <person name="Pedruzzi I."/>
            <person name="Priebe S."/>
            <person name="Groth M."/>
            <person name="Winkler R."/>
            <person name="Li W."/>
            <person name="Kniemeyer O."/>
            <person name="Schroeckh V."/>
            <person name="Hertweck C."/>
            <person name="Hube B."/>
            <person name="White T.C."/>
            <person name="Platzer M."/>
            <person name="Guthke R."/>
            <person name="Heitman J."/>
            <person name="Woestemeyer J."/>
            <person name="Zipfel P.F."/>
            <person name="Monod M."/>
            <person name="Brakhage A.A."/>
        </authorList>
    </citation>
    <scope>NUCLEOTIDE SEQUENCE [LARGE SCALE GENOMIC DNA]</scope>
    <source>
        <strain>HKI 0517</strain>
    </source>
</reference>
<name>SED3_TRIVH</name>
<comment type="function">
    <text evidence="1">Secreted tripeptidyl-peptidase which degrades proteins at acidic pHs and is involved in virulence.</text>
</comment>
<comment type="catalytic activity">
    <reaction>
        <text>Release of an N-terminal tripeptide from a polypeptide.</text>
        <dbReference type="EC" id="3.4.14.10"/>
    </reaction>
</comment>
<comment type="cofactor">
    <cofactor evidence="1">
        <name>Ca(2+)</name>
        <dbReference type="ChEBI" id="CHEBI:29108"/>
    </cofactor>
    <text evidence="1">Binds 1 Ca(2+) ion per subunit.</text>
</comment>
<comment type="subcellular location">
    <subcellularLocation>
        <location evidence="1">Secreted</location>
        <location evidence="1">Extracellular space</location>
    </subcellularLocation>
</comment>
<comment type="sequence caution" evidence="3">
    <conflict type="erroneous gene model prediction">
        <sequence resource="EMBL-CDS" id="EFE42120"/>
    </conflict>
</comment>
<comment type="sequence caution" evidence="3">
    <conflict type="erroneous initiation">
        <sequence resource="EMBL-CDS" id="EFE42120"/>
    </conflict>
    <text>Truncated N-terminus.</text>
</comment>
<protein>
    <recommendedName>
        <fullName>Probable tripeptidyl-peptidase SED3</fullName>
        <ecNumber>3.4.14.10</ecNumber>
    </recommendedName>
    <alternativeName>
        <fullName>Sedolisin-C</fullName>
    </alternativeName>
</protein>
<keyword id="KW-0106">Calcium</keyword>
<keyword id="KW-0325">Glycoprotein</keyword>
<keyword id="KW-0378">Hydrolase</keyword>
<keyword id="KW-0479">Metal-binding</keyword>
<keyword id="KW-0645">Protease</keyword>
<keyword id="KW-0964">Secreted</keyword>
<keyword id="KW-0720">Serine protease</keyword>
<keyword id="KW-0732">Signal</keyword>
<keyword id="KW-0843">Virulence</keyword>
<keyword id="KW-0865">Zymogen</keyword>
<accession>D4D7N6</accession>
<gene>
    <name type="primary">SED3</name>
    <name type="ORF">TRV_03120</name>
</gene>
<sequence>MLLRWHSVIPLFLTMTVALPNTYRTVVEDLPAIPEGWVQGNPPSPETSVRMNLAVGQRNTRTFEQIVLDISTPGHRNYGKHLSRRDLKGLLRPRRETSNLILSWLEESGVPKRSIVDDGDWIHFVISISQAERMLQTRFYYFHDVQDPGISMIRTLKYSVPSRLARHVYMIQPTTKFGKPKKHANSVASLQVIYSSTNATENCNATITPRCLRELYKMGDYVAKPDCRNVIGISGYLDQYARYSDFYKFLELYAPEMKGANFSVAHIGNGQNLQNSTRNSIEASLDIEYALGLSNASAVFYTTSGRGPLVPDLDQPEQEHNSNEPYLDQLHYLLSLPQEALPAVLSTSYGENEQSVPERFSHATCNLFAQLGARGVSVIFSSGDSGVGSSCLTNGKKKITRFNPTFPASCPFVTSVGATFKINPERAIGFSSGGFSDRHSRPVYQNDAVQHYLDKLGDQWKGLYNPKGRGIPDVSAQGANFAIYDHGKVITVSGTSASAPAFAAIIANLNAIRLRANKPVLGYLNPFIYGKGREGFTDIVHGGSKGCVGYSSTNGSTPAVPYASWNATEGWDPVTGVGTPNFRILAKIVQHME</sequence>
<evidence type="ECO:0000250" key="1"/>
<evidence type="ECO:0000255" key="2"/>
<evidence type="ECO:0000305" key="3"/>
<feature type="signal peptide" evidence="2">
    <location>
        <begin position="1"/>
        <end position="18"/>
    </location>
</feature>
<feature type="propeptide" id="PRO_0000397833" description="Removed in mature form" evidence="1">
    <location>
        <begin position="19"/>
        <end position="198"/>
    </location>
</feature>
<feature type="chain" id="PRO_0000397834" description="Probable tripeptidyl-peptidase SED3">
    <location>
        <begin position="199"/>
        <end position="593"/>
    </location>
</feature>
<feature type="domain" description="Peptidase S53">
    <location>
        <begin position="206"/>
        <end position="592"/>
    </location>
</feature>
<feature type="active site" description="Charge relay system" evidence="1">
    <location>
        <position position="282"/>
    </location>
</feature>
<feature type="active site" description="Charge relay system" evidence="1">
    <location>
        <position position="286"/>
    </location>
</feature>
<feature type="active site" description="Charge relay system" evidence="1">
    <location>
        <position position="496"/>
    </location>
</feature>
<feature type="binding site" evidence="1">
    <location>
        <position position="538"/>
    </location>
    <ligand>
        <name>Ca(2+)</name>
        <dbReference type="ChEBI" id="CHEBI:29108"/>
    </ligand>
</feature>
<feature type="binding site" evidence="1">
    <location>
        <position position="539"/>
    </location>
    <ligand>
        <name>Ca(2+)</name>
        <dbReference type="ChEBI" id="CHEBI:29108"/>
    </ligand>
</feature>
<feature type="binding site" evidence="1">
    <location>
        <position position="570"/>
    </location>
    <ligand>
        <name>Ca(2+)</name>
        <dbReference type="ChEBI" id="CHEBI:29108"/>
    </ligand>
</feature>
<feature type="binding site" evidence="1">
    <location>
        <position position="572"/>
    </location>
    <ligand>
        <name>Ca(2+)</name>
        <dbReference type="ChEBI" id="CHEBI:29108"/>
    </ligand>
</feature>
<feature type="glycosylation site" description="N-linked (GlcNAc...) asparagine" evidence="2">
    <location>
        <position position="198"/>
    </location>
</feature>
<feature type="glycosylation site" description="N-linked (GlcNAc...) asparagine" evidence="2">
    <location>
        <position position="204"/>
    </location>
</feature>
<feature type="glycosylation site" description="N-linked (GlcNAc...) asparagine" evidence="2">
    <location>
        <position position="261"/>
    </location>
</feature>
<feature type="glycosylation site" description="N-linked (GlcNAc...) asparagine" evidence="2">
    <location>
        <position position="275"/>
    </location>
</feature>
<feature type="glycosylation site" description="N-linked (GlcNAc...) asparagine" evidence="2">
    <location>
        <position position="295"/>
    </location>
</feature>
<feature type="glycosylation site" description="N-linked (GlcNAc...) asparagine" evidence="2">
    <location>
        <position position="554"/>
    </location>
</feature>
<feature type="glycosylation site" description="N-linked (GlcNAc...) asparagine" evidence="2">
    <location>
        <position position="566"/>
    </location>
</feature>